<sequence>MSMQDTVADMLTRVRNAQMAKKQTVSMPSSKLKVAIANVLQQEGYISNVEVAQEETKSTLTITLKYFEGKPVIEMVKRVSRPGLRQYRGKDKLPSVKQGLGIAIVSTSKGIMTDRAARAAGIGGEVIAFVS</sequence>
<comment type="function">
    <text evidence="1">One of the primary rRNA binding proteins, it binds directly to 16S rRNA central domain where it helps coordinate assembly of the platform of the 30S subunit.</text>
</comment>
<comment type="subunit">
    <text evidence="1">Part of the 30S ribosomal subunit. Contacts proteins S5 and S12.</text>
</comment>
<comment type="similarity">
    <text evidence="1">Belongs to the universal ribosomal protein uS8 family.</text>
</comment>
<name>RS8_ACIB5</name>
<feature type="chain" id="PRO_1000140496" description="Small ribosomal subunit protein uS8">
    <location>
        <begin position="1"/>
        <end position="131"/>
    </location>
</feature>
<feature type="helix" evidence="3">
    <location>
        <begin position="6"/>
        <end position="19"/>
    </location>
</feature>
<feature type="strand" evidence="3">
    <location>
        <begin position="23"/>
        <end position="28"/>
    </location>
</feature>
<feature type="helix" evidence="3">
    <location>
        <begin position="31"/>
        <end position="42"/>
    </location>
</feature>
<feature type="strand" evidence="3">
    <location>
        <begin position="45"/>
        <end position="56"/>
    </location>
</feature>
<feature type="strand" evidence="3">
    <location>
        <begin position="58"/>
        <end position="64"/>
    </location>
</feature>
<feature type="strand" evidence="3">
    <location>
        <begin position="70"/>
        <end position="72"/>
    </location>
</feature>
<feature type="strand" evidence="3">
    <location>
        <begin position="76"/>
        <end position="78"/>
    </location>
</feature>
<feature type="helix" evidence="3">
    <location>
        <begin position="90"/>
        <end position="92"/>
    </location>
</feature>
<feature type="turn" evidence="3">
    <location>
        <begin position="97"/>
        <end position="100"/>
    </location>
</feature>
<feature type="strand" evidence="3">
    <location>
        <begin position="101"/>
        <end position="107"/>
    </location>
</feature>
<feature type="strand" evidence="3">
    <location>
        <begin position="110"/>
        <end position="113"/>
    </location>
</feature>
<feature type="helix" evidence="3">
    <location>
        <begin position="114"/>
        <end position="120"/>
    </location>
</feature>
<feature type="strand" evidence="3">
    <location>
        <begin position="124"/>
        <end position="130"/>
    </location>
</feature>
<evidence type="ECO:0000255" key="1">
    <source>
        <dbReference type="HAMAP-Rule" id="MF_01302"/>
    </source>
</evidence>
<evidence type="ECO:0000305" key="2"/>
<evidence type="ECO:0007829" key="3">
    <source>
        <dbReference type="PDB" id="7M4U"/>
    </source>
</evidence>
<protein>
    <recommendedName>
        <fullName evidence="1">Small ribosomal subunit protein uS8</fullName>
    </recommendedName>
    <alternativeName>
        <fullName evidence="2">30S ribosomal protein S8</fullName>
    </alternativeName>
</protein>
<accession>B7IA25</accession>
<organism>
    <name type="scientific">Acinetobacter baumannii (strain AB0057)</name>
    <dbReference type="NCBI Taxonomy" id="480119"/>
    <lineage>
        <taxon>Bacteria</taxon>
        <taxon>Pseudomonadati</taxon>
        <taxon>Pseudomonadota</taxon>
        <taxon>Gammaproteobacteria</taxon>
        <taxon>Moraxellales</taxon>
        <taxon>Moraxellaceae</taxon>
        <taxon>Acinetobacter</taxon>
        <taxon>Acinetobacter calcoaceticus/baumannii complex</taxon>
    </lineage>
</organism>
<gene>
    <name evidence="1" type="primary">rpsH</name>
    <name type="ordered locus">AB57_3516</name>
</gene>
<dbReference type="EMBL" id="CP001182">
    <property type="protein sequence ID" value="ACJ42883.1"/>
    <property type="molecule type" value="Genomic_DNA"/>
</dbReference>
<dbReference type="RefSeq" id="WP_000062616.1">
    <property type="nucleotide sequence ID" value="NC_011586.2"/>
</dbReference>
<dbReference type="PDB" id="6V39">
    <property type="method" value="EM"/>
    <property type="resolution" value="3.04 A"/>
    <property type="chains" value="h=1-131"/>
</dbReference>
<dbReference type="PDB" id="6V3A">
    <property type="method" value="EM"/>
    <property type="resolution" value="2.82 A"/>
    <property type="chains" value="h=1-131"/>
</dbReference>
<dbReference type="PDB" id="6V3B">
    <property type="method" value="EM"/>
    <property type="resolution" value="2.91 A"/>
    <property type="chains" value="h=1-131"/>
</dbReference>
<dbReference type="PDB" id="6V3E">
    <property type="method" value="EM"/>
    <property type="resolution" value="4.40 A"/>
    <property type="chains" value="h=1-131"/>
</dbReference>
<dbReference type="PDB" id="7M4U">
    <property type="method" value="EM"/>
    <property type="resolution" value="2.71 A"/>
    <property type="chains" value="h=1-131"/>
</dbReference>
<dbReference type="PDB" id="7M4W">
    <property type="method" value="EM"/>
    <property type="resolution" value="2.55 A"/>
    <property type="chains" value="h=1-131"/>
</dbReference>
<dbReference type="PDB" id="7M4X">
    <property type="method" value="EM"/>
    <property type="resolution" value="2.66 A"/>
    <property type="chains" value="h=1-131"/>
</dbReference>
<dbReference type="PDB" id="7M4Y">
    <property type="method" value="EM"/>
    <property type="resolution" value="2.50 A"/>
    <property type="chains" value="h=1-131"/>
</dbReference>
<dbReference type="PDB" id="7M4Z">
    <property type="method" value="EM"/>
    <property type="resolution" value="2.92 A"/>
    <property type="chains" value="h=1-131"/>
</dbReference>
<dbReference type="PDB" id="7RYF">
    <property type="method" value="EM"/>
    <property type="resolution" value="2.65 A"/>
    <property type="chains" value="h=1-131"/>
</dbReference>
<dbReference type="PDB" id="7RYG">
    <property type="method" value="EM"/>
    <property type="resolution" value="2.38 A"/>
    <property type="chains" value="h=1-131"/>
</dbReference>
<dbReference type="PDB" id="7RYH">
    <property type="method" value="EM"/>
    <property type="resolution" value="2.43 A"/>
    <property type="chains" value="h=1-131"/>
</dbReference>
<dbReference type="PDB" id="7UVV">
    <property type="method" value="EM"/>
    <property type="resolution" value="2.50 A"/>
    <property type="chains" value="h=1-131"/>
</dbReference>
<dbReference type="PDB" id="7UVW">
    <property type="method" value="EM"/>
    <property type="resolution" value="2.37 A"/>
    <property type="chains" value="h=1-131"/>
</dbReference>
<dbReference type="PDB" id="7UVX">
    <property type="method" value="EM"/>
    <property type="resolution" value="2.35 A"/>
    <property type="chains" value="h=1-131"/>
</dbReference>
<dbReference type="PDB" id="7UVY">
    <property type="method" value="EM"/>
    <property type="resolution" value="2.39 A"/>
    <property type="chains" value="h=1-131"/>
</dbReference>
<dbReference type="PDB" id="7UVZ">
    <property type="method" value="EM"/>
    <property type="resolution" value="2.21 A"/>
    <property type="chains" value="h=1-131"/>
</dbReference>
<dbReference type="PDB" id="7UW1">
    <property type="method" value="EM"/>
    <property type="resolution" value="2.21 A"/>
    <property type="chains" value="h=1-131"/>
</dbReference>
<dbReference type="PDBsum" id="6V39"/>
<dbReference type="PDBsum" id="6V3A"/>
<dbReference type="PDBsum" id="6V3B"/>
<dbReference type="PDBsum" id="6V3E"/>
<dbReference type="PDBsum" id="7M4U"/>
<dbReference type="PDBsum" id="7M4W"/>
<dbReference type="PDBsum" id="7M4X"/>
<dbReference type="PDBsum" id="7M4Y"/>
<dbReference type="PDBsum" id="7M4Z"/>
<dbReference type="PDBsum" id="7RYF"/>
<dbReference type="PDBsum" id="7RYG"/>
<dbReference type="PDBsum" id="7RYH"/>
<dbReference type="PDBsum" id="7UVV"/>
<dbReference type="PDBsum" id="7UVW"/>
<dbReference type="PDBsum" id="7UVX"/>
<dbReference type="PDBsum" id="7UVY"/>
<dbReference type="PDBsum" id="7UVZ"/>
<dbReference type="PDBsum" id="7UW1"/>
<dbReference type="EMDB" id="EMD-21030"/>
<dbReference type="EMDB" id="EMD-21031"/>
<dbReference type="EMDB" id="EMD-21032"/>
<dbReference type="EMDB" id="EMD-21034"/>
<dbReference type="EMDB" id="EMD-23666"/>
<dbReference type="EMDB" id="EMD-23668"/>
<dbReference type="EMDB" id="EMD-23669"/>
<dbReference type="EMDB" id="EMD-23670"/>
<dbReference type="EMDB" id="EMD-23671"/>
<dbReference type="EMDB" id="EMD-24738"/>
<dbReference type="EMDB" id="EMD-24739"/>
<dbReference type="EMDB" id="EMD-24740"/>
<dbReference type="EMDB" id="EMD-26817"/>
<dbReference type="EMDB" id="EMD-26818"/>
<dbReference type="EMDB" id="EMD-26819"/>
<dbReference type="EMDB" id="EMD-26820"/>
<dbReference type="EMDB" id="EMD-26821"/>
<dbReference type="EMDB" id="EMD-26822"/>
<dbReference type="SMR" id="B7IA25"/>
<dbReference type="IntAct" id="B7IA25">
    <property type="interactions" value="1"/>
</dbReference>
<dbReference type="GeneID" id="92895303"/>
<dbReference type="KEGG" id="abn:AB57_3516"/>
<dbReference type="HOGENOM" id="CLU_098428_0_0_6"/>
<dbReference type="Proteomes" id="UP000007094">
    <property type="component" value="Chromosome"/>
</dbReference>
<dbReference type="GO" id="GO:1990904">
    <property type="term" value="C:ribonucleoprotein complex"/>
    <property type="evidence" value="ECO:0007669"/>
    <property type="project" value="UniProtKB-KW"/>
</dbReference>
<dbReference type="GO" id="GO:0005840">
    <property type="term" value="C:ribosome"/>
    <property type="evidence" value="ECO:0007669"/>
    <property type="project" value="UniProtKB-KW"/>
</dbReference>
<dbReference type="GO" id="GO:0019843">
    <property type="term" value="F:rRNA binding"/>
    <property type="evidence" value="ECO:0007669"/>
    <property type="project" value="UniProtKB-UniRule"/>
</dbReference>
<dbReference type="GO" id="GO:0003735">
    <property type="term" value="F:structural constituent of ribosome"/>
    <property type="evidence" value="ECO:0007669"/>
    <property type="project" value="InterPro"/>
</dbReference>
<dbReference type="GO" id="GO:0006412">
    <property type="term" value="P:translation"/>
    <property type="evidence" value="ECO:0007669"/>
    <property type="project" value="UniProtKB-UniRule"/>
</dbReference>
<dbReference type="FunFam" id="3.30.1370.30:FF:000002">
    <property type="entry name" value="30S ribosomal protein S8"/>
    <property type="match status" value="1"/>
</dbReference>
<dbReference type="FunFam" id="3.30.1490.10:FF:000001">
    <property type="entry name" value="30S ribosomal protein S8"/>
    <property type="match status" value="1"/>
</dbReference>
<dbReference type="Gene3D" id="3.30.1370.30">
    <property type="match status" value="1"/>
</dbReference>
<dbReference type="Gene3D" id="3.30.1490.10">
    <property type="match status" value="1"/>
</dbReference>
<dbReference type="HAMAP" id="MF_01302_B">
    <property type="entry name" value="Ribosomal_uS8_B"/>
    <property type="match status" value="1"/>
</dbReference>
<dbReference type="InterPro" id="IPR000630">
    <property type="entry name" value="Ribosomal_uS8"/>
</dbReference>
<dbReference type="InterPro" id="IPR047863">
    <property type="entry name" value="Ribosomal_uS8_CS"/>
</dbReference>
<dbReference type="InterPro" id="IPR035987">
    <property type="entry name" value="Ribosomal_uS8_sf"/>
</dbReference>
<dbReference type="NCBIfam" id="NF001109">
    <property type="entry name" value="PRK00136.1"/>
    <property type="match status" value="1"/>
</dbReference>
<dbReference type="PANTHER" id="PTHR11758">
    <property type="entry name" value="40S RIBOSOMAL PROTEIN S15A"/>
    <property type="match status" value="1"/>
</dbReference>
<dbReference type="Pfam" id="PF00410">
    <property type="entry name" value="Ribosomal_S8"/>
    <property type="match status" value="1"/>
</dbReference>
<dbReference type="SUPFAM" id="SSF56047">
    <property type="entry name" value="Ribosomal protein S8"/>
    <property type="match status" value="1"/>
</dbReference>
<dbReference type="PROSITE" id="PS00053">
    <property type="entry name" value="RIBOSOMAL_S8"/>
    <property type="match status" value="1"/>
</dbReference>
<reference key="1">
    <citation type="journal article" date="2008" name="J. Bacteriol.">
        <title>Comparative genome sequence analysis of multidrug-resistant Acinetobacter baumannii.</title>
        <authorList>
            <person name="Adams M.D."/>
            <person name="Goglin K."/>
            <person name="Molyneaux N."/>
            <person name="Hujer K.M."/>
            <person name="Lavender H."/>
            <person name="Jamison J.J."/>
            <person name="MacDonald I.J."/>
            <person name="Martin K.M."/>
            <person name="Russo T."/>
            <person name="Campagnari A.A."/>
            <person name="Hujer A.M."/>
            <person name="Bonomo R.A."/>
            <person name="Gill S.R."/>
        </authorList>
    </citation>
    <scope>NUCLEOTIDE SEQUENCE [LARGE SCALE GENOMIC DNA]</scope>
    <source>
        <strain>AB0057</strain>
    </source>
</reference>
<keyword id="KW-0002">3D-structure</keyword>
<keyword id="KW-0687">Ribonucleoprotein</keyword>
<keyword id="KW-0689">Ribosomal protein</keyword>
<keyword id="KW-0694">RNA-binding</keyword>
<keyword id="KW-0699">rRNA-binding</keyword>
<proteinExistence type="evidence at protein level"/>